<organism>
    <name type="scientific">Ctenus ornatus</name>
    <name type="common">Brazilian spider</name>
    <name type="synonym">Oligoctenus ornatus</name>
    <dbReference type="NCBI Taxonomy" id="406443"/>
    <lineage>
        <taxon>Eukaryota</taxon>
        <taxon>Metazoa</taxon>
        <taxon>Ecdysozoa</taxon>
        <taxon>Arthropoda</taxon>
        <taxon>Chelicerata</taxon>
        <taxon>Arachnida</taxon>
        <taxon>Araneae</taxon>
        <taxon>Araneomorphae</taxon>
        <taxon>Entelegynae</taxon>
        <taxon>Lycosoidea</taxon>
        <taxon>Ctenidae</taxon>
        <taxon>Oligoctenus</taxon>
    </lineage>
</organism>
<evidence type="ECO:0000250" key="1">
    <source>
        <dbReference type="UniProtKB" id="P59367"/>
    </source>
</evidence>
<evidence type="ECO:0000269" key="2">
    <source ref="1"/>
</evidence>
<evidence type="ECO:0000305" key="3"/>
<dbReference type="ArachnoServer" id="AS000374">
    <property type="toxin name" value="U11-ctenitoxin-Co1b (N-terminal fragment)"/>
</dbReference>
<dbReference type="GO" id="GO:0005576">
    <property type="term" value="C:extracellular region"/>
    <property type="evidence" value="ECO:0007669"/>
    <property type="project" value="UniProtKB-SubCell"/>
</dbReference>
<dbReference type="GO" id="GO:0090729">
    <property type="term" value="F:toxin activity"/>
    <property type="evidence" value="ECO:0007669"/>
    <property type="project" value="UniProtKB-KW"/>
</dbReference>
<dbReference type="InterPro" id="IPR035285">
    <property type="entry name" value="CNTX"/>
</dbReference>
<dbReference type="Pfam" id="PF17492">
    <property type="entry name" value="D_CNTX"/>
    <property type="match status" value="1"/>
</dbReference>
<comment type="function">
    <text evidence="1">Neurotoxin.</text>
</comment>
<comment type="subunit">
    <text evidence="1">Monomer.</text>
</comment>
<comment type="subcellular location">
    <subcellularLocation>
        <location evidence="2">Secreted</location>
    </subcellularLocation>
</comment>
<comment type="tissue specificity">
    <text evidence="2">Expressed by the venom gland.</text>
</comment>
<comment type="domain">
    <text evidence="3">The presence of a 'disulfide through disulfide knot' structurally defines this protein as a knottin.</text>
</comment>
<comment type="mass spectrometry"/>
<comment type="similarity">
    <text evidence="3">Belongs to the neurotoxin 03 (Tx2) family. 06 subfamily.</text>
</comment>
<protein>
    <recommendedName>
        <fullName>U11-ctenitoxin-Co1b</fullName>
        <shortName>U11-CNTX-Co1b</shortName>
    </recommendedName>
    <alternativeName>
        <fullName>Neurotoxin Oc M9-7</fullName>
    </alternativeName>
</protein>
<proteinExistence type="evidence at protein level"/>
<name>TX36D_CTEON</name>
<keyword id="KW-0903">Direct protein sequencing</keyword>
<keyword id="KW-1015">Disulfide bond</keyword>
<keyword id="KW-0960">Knottin</keyword>
<keyword id="KW-0528">Neurotoxin</keyword>
<keyword id="KW-0964">Secreted</keyword>
<keyword id="KW-0800">Toxin</keyword>
<accession>P85277</accession>
<feature type="chain" id="PRO_0000302114" description="U11-ctenitoxin-Co1b">
    <location>
        <begin position="1"/>
        <end position="25" status="greater than"/>
    </location>
</feature>
<feature type="disulfide bond" evidence="3">
    <location>
        <begin position="4"/>
        <end position="18"/>
    </location>
</feature>
<feature type="disulfide bond" evidence="3">
    <location>
        <begin position="11"/>
        <end position="22"/>
    </location>
</feature>
<feature type="disulfide bond" evidence="3">
    <location>
        <begin position="17"/>
        <end status="unknown"/>
    </location>
</feature>
<feature type="disulfide bond" evidence="3">
    <location>
        <begin position="24"/>
        <end status="unknown"/>
    </location>
</feature>
<feature type="non-terminal residue">
    <location>
        <position position="25"/>
    </location>
</feature>
<reference evidence="3" key="1">
    <citation type="submission" date="2007-07" db="UniProtKB">
        <authorList>
            <person name="Borges M.H."/>
            <person name="Oliveira C.F.B."/>
            <person name="Goncalves J.M."/>
            <person name="Rates B."/>
            <person name="Santos D.M."/>
            <person name="Pimenta A.M.C."/>
            <person name="Cordeiro M.N."/>
            <person name="Richardson M."/>
        </authorList>
    </citation>
    <scope>PROTEIN SEQUENCE</scope>
    <scope>SUBCELLULAR LOCATION</scope>
    <scope>TISSUE SPECIFICITY</scope>
    <scope>MASS SPECTROMETRY</scope>
    <source>
        <tissue>Venom</tissue>
    </source>
</reference>
<sequence>KAKCAEIDQDCKTSCDCCKGACTCY</sequence>